<organism>
    <name type="scientific">Petunia hybrida</name>
    <name type="common">Petunia</name>
    <dbReference type="NCBI Taxonomy" id="4102"/>
    <lineage>
        <taxon>Eukaryota</taxon>
        <taxon>Viridiplantae</taxon>
        <taxon>Streptophyta</taxon>
        <taxon>Embryophyta</taxon>
        <taxon>Tracheophyta</taxon>
        <taxon>Spermatophyta</taxon>
        <taxon>Magnoliopsida</taxon>
        <taxon>eudicotyledons</taxon>
        <taxon>Gunneridae</taxon>
        <taxon>Pentapetalae</taxon>
        <taxon>asterids</taxon>
        <taxon>lamiids</taxon>
        <taxon>Solanales</taxon>
        <taxon>Solanaceae</taxon>
        <taxon>Petunioideae</taxon>
        <taxon>Petunia</taxon>
    </lineage>
</organism>
<sequence length="357" mass="40646">MEVVEVLHMNGGNGDSSYANNSLVQQKVILMTKPITEQAMIDLYSSLFPETLCIADLGCSLGANTFLVVSQIVKIVEKERKKHGFKSPEFYFHFNDLPGNDFNTLFQSLGAFQEDLRKHIGESFGPCFFSGVPGSFYTRLFPSKSLHFVYSSYSLMWLSQVPNGIENNKGNIYMARTSPLSVIKAYYKQYEIDFSNFLKYRSEELMKGGKMVLTLLGRESEDPTSKECCYIWELLAMALNELVKEGLIKEEKVDAFNIPQYTPSPAEVKYLVEKEGSFTINRLETSRVHWNASNNVKNGGYNVSRCMRAVAEPLLVSHFDKELMDLVFHKYEEIISDCMSKEKTEFINVIVSLTKIN</sequence>
<feature type="chain" id="PRO_0000451513" description="S-adenosyl-L-methionine:benzoic acid/salicylic acid carboxyl methyltransferase 3">
    <location>
        <begin position="1"/>
        <end position="357"/>
    </location>
</feature>
<feature type="binding site" evidence="2">
    <location>
        <position position="18"/>
    </location>
    <ligand>
        <name>S-adenosyl-L-homocysteine</name>
        <dbReference type="ChEBI" id="CHEBI:57856"/>
    </ligand>
</feature>
<feature type="binding site" evidence="2">
    <location>
        <position position="25"/>
    </location>
    <ligand>
        <name>benzoate</name>
        <dbReference type="ChEBI" id="CHEBI:16150"/>
    </ligand>
</feature>
<feature type="binding site" evidence="2">
    <location>
        <position position="59"/>
    </location>
    <ligand>
        <name>S-adenosyl-L-homocysteine</name>
        <dbReference type="ChEBI" id="CHEBI:57856"/>
    </ligand>
</feature>
<feature type="binding site" evidence="2">
    <location>
        <position position="64"/>
    </location>
    <ligand>
        <name>S-adenosyl-L-homocysteine</name>
        <dbReference type="ChEBI" id="CHEBI:57856"/>
    </ligand>
</feature>
<feature type="binding site" evidence="2">
    <location>
        <position position="96"/>
    </location>
    <ligand>
        <name>S-adenosyl-L-homocysteine</name>
        <dbReference type="ChEBI" id="CHEBI:57856"/>
    </ligand>
</feature>
<feature type="binding site" evidence="1">
    <location>
        <position position="97"/>
    </location>
    <ligand>
        <name>S-adenosyl-L-homocysteine</name>
        <dbReference type="ChEBI" id="CHEBI:57856"/>
    </ligand>
</feature>
<feature type="binding site" evidence="2">
    <location>
        <position position="135"/>
    </location>
    <ligand>
        <name>S-adenosyl-L-homocysteine</name>
        <dbReference type="ChEBI" id="CHEBI:57856"/>
    </ligand>
</feature>
<feature type="binding site" evidence="2">
    <location>
        <position position="136"/>
    </location>
    <ligand>
        <name>S-adenosyl-L-homocysteine</name>
        <dbReference type="ChEBI" id="CHEBI:57856"/>
    </ligand>
</feature>
<feature type="binding site" evidence="2">
    <location>
        <position position="157"/>
    </location>
    <ligand>
        <name>benzoate</name>
        <dbReference type="ChEBI" id="CHEBI:16150"/>
    </ligand>
</feature>
<feature type="binding site" evidence="4">
    <location>
        <position position="168"/>
    </location>
    <ligand>
        <name>Mg(2+)</name>
        <dbReference type="ChEBI" id="CHEBI:18420"/>
    </ligand>
</feature>
<feature type="binding site" evidence="4">
    <location>
        <position position="254"/>
    </location>
    <ligand>
        <name>Mg(2+)</name>
        <dbReference type="ChEBI" id="CHEBI:18420"/>
    </ligand>
</feature>
<feature type="binding site" evidence="4">
    <location>
        <position position="256"/>
    </location>
    <ligand>
        <name>Mg(2+)</name>
        <dbReference type="ChEBI" id="CHEBI:18420"/>
    </ligand>
</feature>
<feature type="binding site" evidence="4">
    <location>
        <position position="257"/>
    </location>
    <ligand>
        <name>Mg(2+)</name>
        <dbReference type="ChEBI" id="CHEBI:18420"/>
    </ligand>
</feature>
<feature type="binding site" evidence="2">
    <location>
        <position position="260"/>
    </location>
    <ligand>
        <name>benzoate</name>
        <dbReference type="ChEBI" id="CHEBI:16150"/>
    </ligand>
</feature>
<feature type="site" description="Involved in substrate discrimination" evidence="5">
    <location>
        <position position="150"/>
    </location>
</feature>
<proteinExistence type="evidence at transcript level"/>
<protein>
    <recommendedName>
        <fullName evidence="6">S-adenosyl-L-methionine:benzoic acid/salicylic acid carboxyl methyltransferase 3</fullName>
        <shortName evidence="6">PhBSMT3</shortName>
        <ecNumber evidence="3">2.1.1.273</ecNumber>
    </recommendedName>
</protein>
<name>BSMT3_PETHY</name>
<evidence type="ECO:0000250" key="1">
    <source>
        <dbReference type="UniProtKB" id="A0A6C0WW36"/>
    </source>
</evidence>
<evidence type="ECO:0000250" key="2">
    <source>
        <dbReference type="UniProtKB" id="B2KPR3"/>
    </source>
</evidence>
<evidence type="ECO:0000250" key="3">
    <source>
        <dbReference type="UniProtKB" id="Q84UB5"/>
    </source>
</evidence>
<evidence type="ECO:0000250" key="4">
    <source>
        <dbReference type="UniProtKB" id="Q9FLN8"/>
    </source>
</evidence>
<evidence type="ECO:0000250" key="5">
    <source>
        <dbReference type="UniProtKB" id="Q9FZN8"/>
    </source>
</evidence>
<evidence type="ECO:0000303" key="6">
    <source ref="1"/>
</evidence>
<evidence type="ECO:0000305" key="7"/>
<comment type="function">
    <text evidence="3">Converts benzoic acid into the volatile ester methyl benzoates (By similarity). This scent, mostly produced in a rhythmical, diurnal manner, attracts the pollinators (By similarity).</text>
</comment>
<comment type="catalytic activity">
    <reaction evidence="3">
        <text>benzoate + S-adenosyl-L-methionine = methyl benzoate + S-adenosyl-L-homocysteine</text>
        <dbReference type="Rhea" id="RHEA:36099"/>
        <dbReference type="ChEBI" id="CHEBI:16150"/>
        <dbReference type="ChEBI" id="CHEBI:57856"/>
        <dbReference type="ChEBI" id="CHEBI:59789"/>
        <dbReference type="ChEBI" id="CHEBI:72775"/>
        <dbReference type="EC" id="2.1.1.273"/>
    </reaction>
    <physiologicalReaction direction="left-to-right" evidence="3">
        <dbReference type="Rhea" id="RHEA:36100"/>
    </physiologicalReaction>
</comment>
<comment type="pathway">
    <text evidence="3">Aromatic compound metabolism.</text>
</comment>
<comment type="similarity">
    <text evidence="7">Belongs to the methyltransferase superfamily. Type-7 methyltransferase family.</text>
</comment>
<dbReference type="EC" id="2.1.1.273" evidence="3"/>
<dbReference type="EMBL" id="DQ494491">
    <property type="protein sequence ID" value="ABF50941.1"/>
    <property type="molecule type" value="mRNA"/>
</dbReference>
<dbReference type="SMR" id="A4ZDG8"/>
<dbReference type="GO" id="GO:0046872">
    <property type="term" value="F:metal ion binding"/>
    <property type="evidence" value="ECO:0007669"/>
    <property type="project" value="UniProtKB-KW"/>
</dbReference>
<dbReference type="GO" id="GO:0008168">
    <property type="term" value="F:methyltransferase activity"/>
    <property type="evidence" value="ECO:0000250"/>
    <property type="project" value="UniProtKB"/>
</dbReference>
<dbReference type="GO" id="GO:0032259">
    <property type="term" value="P:methylation"/>
    <property type="evidence" value="ECO:0007669"/>
    <property type="project" value="UniProtKB-KW"/>
</dbReference>
<dbReference type="GO" id="GO:0009856">
    <property type="term" value="P:pollination"/>
    <property type="evidence" value="ECO:0000250"/>
    <property type="project" value="UniProtKB"/>
</dbReference>
<dbReference type="Gene3D" id="1.10.1200.270">
    <property type="entry name" value="Methyltransferase, alpha-helical capping domain"/>
    <property type="match status" value="1"/>
</dbReference>
<dbReference type="Gene3D" id="3.40.50.150">
    <property type="entry name" value="Vaccinia Virus protein VP39"/>
    <property type="match status" value="1"/>
</dbReference>
<dbReference type="InterPro" id="IPR005299">
    <property type="entry name" value="MeTrfase_7"/>
</dbReference>
<dbReference type="InterPro" id="IPR042086">
    <property type="entry name" value="MeTrfase_capping"/>
</dbReference>
<dbReference type="InterPro" id="IPR029063">
    <property type="entry name" value="SAM-dependent_MTases_sf"/>
</dbReference>
<dbReference type="PANTHER" id="PTHR31009">
    <property type="entry name" value="S-ADENOSYL-L-METHIONINE:CARBOXYL METHYLTRANSFERASE FAMILY PROTEIN"/>
    <property type="match status" value="1"/>
</dbReference>
<dbReference type="Pfam" id="PF03492">
    <property type="entry name" value="Methyltransf_7"/>
    <property type="match status" value="1"/>
</dbReference>
<dbReference type="SUPFAM" id="SSF53335">
    <property type="entry name" value="S-adenosyl-L-methionine-dependent methyltransferases"/>
    <property type="match status" value="1"/>
</dbReference>
<gene>
    <name evidence="6" type="primary">BSMT3</name>
</gene>
<keyword id="KW-0460">Magnesium</keyword>
<keyword id="KW-0479">Metal-binding</keyword>
<keyword id="KW-0489">Methyltransferase</keyword>
<keyword id="KW-0949">S-adenosyl-L-methionine</keyword>
<keyword id="KW-0808">Transferase</keyword>
<reference key="1">
    <citation type="submission" date="2006-04" db="EMBL/GenBank/DDBJ databases">
        <title>Cloning and expression identification of the S-adenosyl-L-methionine:benzoic acid/salicylic acid carboxyl methyltransferase for Petunia x hybrida.</title>
        <authorList>
            <person name="Long Z."/>
            <person name="Yu L."/>
            <person name="Zhang H."/>
        </authorList>
    </citation>
    <scope>NUCLEOTIDE SEQUENCE [MRNA]</scope>
</reference>
<accession>A4ZDG8</accession>